<gene>
    <name evidence="1" type="primary">tsf</name>
    <name type="ordered locus">APP7_0611</name>
</gene>
<organism>
    <name type="scientific">Actinobacillus pleuropneumoniae serotype 7 (strain AP76)</name>
    <dbReference type="NCBI Taxonomy" id="537457"/>
    <lineage>
        <taxon>Bacteria</taxon>
        <taxon>Pseudomonadati</taxon>
        <taxon>Pseudomonadota</taxon>
        <taxon>Gammaproteobacteria</taxon>
        <taxon>Pasteurellales</taxon>
        <taxon>Pasteurellaceae</taxon>
        <taxon>Actinobacillus</taxon>
    </lineage>
</organism>
<feature type="chain" id="PRO_1000116682" description="Elongation factor Ts">
    <location>
        <begin position="1"/>
        <end position="283"/>
    </location>
</feature>
<feature type="region of interest" description="Involved in Mg(2+) ion dislocation from EF-Tu" evidence="1">
    <location>
        <begin position="80"/>
        <end position="83"/>
    </location>
</feature>
<sequence>MAEITASLVKELRERTGAGMMECKKALVEANGDIELAIDNMRKSGQAKAAKKAGRVAAEGVILARIGAGFGVLVEMNCETDFVAKDAGFLGLANEVADFALANKGTTIETLAAQFEEKRAALVAKIGENMNIRRVQYLDGQVIAQYLHGAKIGVLVAGEGSDEELKKVAMHVAASRPEFVNPEDVSAEVVAHERQIQIDIAINSGKPKEIAEKMVEGRMKKFTGEVSLTGQAFVMDPSQSVGDYLKSVNTKVTNFIRLEVGEGIEKVEEDFAAEVAKITGGNA</sequence>
<protein>
    <recommendedName>
        <fullName evidence="1">Elongation factor Ts</fullName>
        <shortName evidence="1">EF-Ts</shortName>
    </recommendedName>
</protein>
<evidence type="ECO:0000255" key="1">
    <source>
        <dbReference type="HAMAP-Rule" id="MF_00050"/>
    </source>
</evidence>
<keyword id="KW-0963">Cytoplasm</keyword>
<keyword id="KW-0251">Elongation factor</keyword>
<keyword id="KW-0648">Protein biosynthesis</keyword>
<name>EFTS_ACTP7</name>
<proteinExistence type="inferred from homology"/>
<reference key="1">
    <citation type="submission" date="2008-06" db="EMBL/GenBank/DDBJ databases">
        <title>Genome and proteome analysis of A. pleuropneumoniae serotype 7.</title>
        <authorList>
            <person name="Linke B."/>
            <person name="Buettner F."/>
            <person name="Martinez-Arias R."/>
            <person name="Goesmann A."/>
            <person name="Baltes N."/>
            <person name="Tegetmeyer H."/>
            <person name="Singh M."/>
            <person name="Gerlach G.F."/>
        </authorList>
    </citation>
    <scope>NUCLEOTIDE SEQUENCE [LARGE SCALE GENOMIC DNA]</scope>
    <source>
        <strain>AP76</strain>
    </source>
</reference>
<dbReference type="EMBL" id="CP001091">
    <property type="protein sequence ID" value="ACE61263.1"/>
    <property type="molecule type" value="Genomic_DNA"/>
</dbReference>
<dbReference type="RefSeq" id="WP_005603944.1">
    <property type="nucleotide sequence ID" value="NC_010939.1"/>
</dbReference>
<dbReference type="SMR" id="B3GXB1"/>
<dbReference type="KEGG" id="apa:APP7_0611"/>
<dbReference type="HOGENOM" id="CLU_047155_0_2_6"/>
<dbReference type="Proteomes" id="UP000001226">
    <property type="component" value="Chromosome"/>
</dbReference>
<dbReference type="GO" id="GO:0005737">
    <property type="term" value="C:cytoplasm"/>
    <property type="evidence" value="ECO:0007669"/>
    <property type="project" value="UniProtKB-SubCell"/>
</dbReference>
<dbReference type="GO" id="GO:0003746">
    <property type="term" value="F:translation elongation factor activity"/>
    <property type="evidence" value="ECO:0007669"/>
    <property type="project" value="UniProtKB-UniRule"/>
</dbReference>
<dbReference type="CDD" id="cd14275">
    <property type="entry name" value="UBA_EF-Ts"/>
    <property type="match status" value="1"/>
</dbReference>
<dbReference type="FunFam" id="1.10.286.20:FF:000001">
    <property type="entry name" value="Elongation factor Ts"/>
    <property type="match status" value="1"/>
</dbReference>
<dbReference type="FunFam" id="1.10.8.10:FF:000001">
    <property type="entry name" value="Elongation factor Ts"/>
    <property type="match status" value="1"/>
</dbReference>
<dbReference type="FunFam" id="3.30.479.20:FF:000001">
    <property type="entry name" value="Elongation factor Ts"/>
    <property type="match status" value="1"/>
</dbReference>
<dbReference type="Gene3D" id="1.10.286.20">
    <property type="match status" value="1"/>
</dbReference>
<dbReference type="Gene3D" id="1.10.8.10">
    <property type="entry name" value="DNA helicase RuvA subunit, C-terminal domain"/>
    <property type="match status" value="1"/>
</dbReference>
<dbReference type="Gene3D" id="3.30.479.20">
    <property type="entry name" value="Elongation factor Ts, dimerisation domain"/>
    <property type="match status" value="2"/>
</dbReference>
<dbReference type="HAMAP" id="MF_00050">
    <property type="entry name" value="EF_Ts"/>
    <property type="match status" value="1"/>
</dbReference>
<dbReference type="InterPro" id="IPR036402">
    <property type="entry name" value="EF-Ts_dimer_sf"/>
</dbReference>
<dbReference type="InterPro" id="IPR001816">
    <property type="entry name" value="Transl_elong_EFTs/EF1B"/>
</dbReference>
<dbReference type="InterPro" id="IPR014039">
    <property type="entry name" value="Transl_elong_EFTs/EF1B_dimer"/>
</dbReference>
<dbReference type="InterPro" id="IPR018101">
    <property type="entry name" value="Transl_elong_Ts_CS"/>
</dbReference>
<dbReference type="InterPro" id="IPR009060">
    <property type="entry name" value="UBA-like_sf"/>
</dbReference>
<dbReference type="NCBIfam" id="TIGR00116">
    <property type="entry name" value="tsf"/>
    <property type="match status" value="1"/>
</dbReference>
<dbReference type="PANTHER" id="PTHR11741">
    <property type="entry name" value="ELONGATION FACTOR TS"/>
    <property type="match status" value="1"/>
</dbReference>
<dbReference type="PANTHER" id="PTHR11741:SF0">
    <property type="entry name" value="ELONGATION FACTOR TS, MITOCHONDRIAL"/>
    <property type="match status" value="1"/>
</dbReference>
<dbReference type="Pfam" id="PF00889">
    <property type="entry name" value="EF_TS"/>
    <property type="match status" value="1"/>
</dbReference>
<dbReference type="SUPFAM" id="SSF54713">
    <property type="entry name" value="Elongation factor Ts (EF-Ts), dimerisation domain"/>
    <property type="match status" value="2"/>
</dbReference>
<dbReference type="SUPFAM" id="SSF46934">
    <property type="entry name" value="UBA-like"/>
    <property type="match status" value="1"/>
</dbReference>
<dbReference type="PROSITE" id="PS01126">
    <property type="entry name" value="EF_TS_1"/>
    <property type="match status" value="1"/>
</dbReference>
<dbReference type="PROSITE" id="PS01127">
    <property type="entry name" value="EF_TS_2"/>
    <property type="match status" value="1"/>
</dbReference>
<comment type="function">
    <text evidence="1">Associates with the EF-Tu.GDP complex and induces the exchange of GDP to GTP. It remains bound to the aminoacyl-tRNA.EF-Tu.GTP complex up to the GTP hydrolysis stage on the ribosome.</text>
</comment>
<comment type="subcellular location">
    <subcellularLocation>
        <location evidence="1">Cytoplasm</location>
    </subcellularLocation>
</comment>
<comment type="similarity">
    <text evidence="1">Belongs to the EF-Ts family.</text>
</comment>
<accession>B3GXB1</accession>